<proteinExistence type="evidence at protein level"/>
<sequence length="818" mass="89979">MTILYKVEGKEFSKDSVFPHKKVLCSVSARNIVAFSALQSAIFPASHGGDAGDGSLPGAGLAVGASNSHVYVCDIVTPWEYYKVCSSKSLISVLQWSPNGEQLLLGYVGGRVEIWQPRNQSINLWVLQYYATVPSEDIIEAQFFQNGKGVIFNALKKDHTYYAEKFERVEQQRPTLSGFGGVASEGCVLLTSSGLLAAFSLPAIQKTSAAGADGPAHEVVELTPALHSIGISRSFIEHCSMTPSPSGALNIAFSCGWQQQLVQCFKVSLSLEGELGLEQHLAIKSESQTSIFLGPLDGRRISHLKWTRIANEDVIFIAYACPDGAGSQLEQWTLTRRHQSVHALLQGGGGANNKPNEFVQSESWEQVGKVQLNASLADISVTRLSVSTPDSCQVYAILQDNSVQVLEPNSMKQLNHTQFDRLSDASGAVKFVSGDLTPSSQILLIFDSHAQLYAMQAPLPKQGGSGLLLLEYCIVTGCDASDVLLLNLGNLEALVEKLTDNFTRQPSFVRHFYYANFLALKSNICRMQQQEFDNLIILHAISTTFKSLLRPSDLGFQDKGPADNLAIKLAESIPDVDTVMLNLDAKDFTVEPVMLQSLQQLIQWVTDLALNMLHRLPEEVMKTKLSGKRPSYDISRDIVAISSLRELLVMIRIWGLLNTQCLPVYTKTMDNIDVLVILFRLLTRLAQNPAEPDEMLLDECSLLSKQLLIPQPTKFNPTTLLSAQGFAAVKSGQLQFTSMEEPTCLQDMETEEVVFASSVKDGVSNLQLGARPSHIRRCARCGFVFVNNASKVAKTSALKAWFSKWLHCHCGGFWKQVH</sequence>
<evidence type="ECO:0000250" key="1"/>
<evidence type="ECO:0000269" key="2">
    <source>
    </source>
</evidence>
<evidence type="ECO:0000269" key="3">
    <source>
    </source>
</evidence>
<evidence type="ECO:0000305" key="4"/>
<accession>Q9W278</accession>
<accession>Q8MT57</accession>
<accession>Q9GYW8</accession>
<name>MED16_DROME</name>
<organism>
    <name type="scientific">Drosophila melanogaster</name>
    <name type="common">Fruit fly</name>
    <dbReference type="NCBI Taxonomy" id="7227"/>
    <lineage>
        <taxon>Eukaryota</taxon>
        <taxon>Metazoa</taxon>
        <taxon>Ecdysozoa</taxon>
        <taxon>Arthropoda</taxon>
        <taxon>Hexapoda</taxon>
        <taxon>Insecta</taxon>
        <taxon>Pterygota</taxon>
        <taxon>Neoptera</taxon>
        <taxon>Endopterygota</taxon>
        <taxon>Diptera</taxon>
        <taxon>Brachycera</taxon>
        <taxon>Muscomorpha</taxon>
        <taxon>Ephydroidea</taxon>
        <taxon>Drosophilidae</taxon>
        <taxon>Drosophila</taxon>
        <taxon>Sophophora</taxon>
    </lineage>
</organism>
<protein>
    <recommendedName>
        <fullName>Mediator of RNA polymerase II transcription subunit 16</fullName>
    </recommendedName>
    <alternativeName>
        <fullName>Mediator complex subunit 16</fullName>
    </alternativeName>
</protein>
<dbReference type="EMBL" id="AF289994">
    <property type="protein sequence ID" value="AAG02459.1"/>
    <property type="molecule type" value="mRNA"/>
</dbReference>
<dbReference type="EMBL" id="AE013599">
    <property type="protein sequence ID" value="AAF46815.2"/>
    <property type="molecule type" value="Genomic_DNA"/>
</dbReference>
<dbReference type="EMBL" id="AY118369">
    <property type="protein sequence ID" value="AAM48398.1"/>
    <property type="status" value="ALT_FRAME"/>
    <property type="molecule type" value="mRNA"/>
</dbReference>
<dbReference type="EMBL" id="BT025233">
    <property type="protein sequence ID" value="ABF17924.1"/>
    <property type="molecule type" value="mRNA"/>
</dbReference>
<dbReference type="RefSeq" id="NP_611650.2">
    <property type="nucleotide sequence ID" value="NM_137806.4"/>
</dbReference>
<dbReference type="SMR" id="Q9W278"/>
<dbReference type="BioGRID" id="63152">
    <property type="interactions" value="31"/>
</dbReference>
<dbReference type="ComplexPortal" id="CPX-2308">
    <property type="entry name" value="Core mediator complex"/>
</dbReference>
<dbReference type="FunCoup" id="Q9W278">
    <property type="interactions" value="1128"/>
</dbReference>
<dbReference type="IntAct" id="Q9W278">
    <property type="interactions" value="52"/>
</dbReference>
<dbReference type="STRING" id="7227.FBpp0071684"/>
<dbReference type="PaxDb" id="7227-FBpp0071684"/>
<dbReference type="DNASU" id="37535"/>
<dbReference type="EnsemblMetazoa" id="FBtr0071770">
    <property type="protein sequence ID" value="FBpp0071684"/>
    <property type="gene ID" value="FBgn0034707"/>
</dbReference>
<dbReference type="GeneID" id="37535"/>
<dbReference type="KEGG" id="dme:Dmel_CG5465"/>
<dbReference type="AGR" id="FB:FBgn0034707"/>
<dbReference type="CTD" id="10025"/>
<dbReference type="FlyBase" id="FBgn0034707">
    <property type="gene designation" value="MED16"/>
</dbReference>
<dbReference type="VEuPathDB" id="VectorBase:FBgn0034707"/>
<dbReference type="eggNOG" id="ENOG502QQ3H">
    <property type="taxonomic scope" value="Eukaryota"/>
</dbReference>
<dbReference type="GeneTree" id="ENSGT00390000003821"/>
<dbReference type="HOGENOM" id="CLU_018773_0_0_1"/>
<dbReference type="InParanoid" id="Q9W278"/>
<dbReference type="OMA" id="IEHCSMT"/>
<dbReference type="OrthoDB" id="10018574at2759"/>
<dbReference type="PhylomeDB" id="Q9W278"/>
<dbReference type="Reactome" id="R-DME-9841922">
    <property type="pathway name" value="MLL4 and MLL3 complexes regulate expression of PPARG target genes in adipogenesis and hepatic steatosis"/>
</dbReference>
<dbReference type="BioGRID-ORCS" id="37535">
    <property type="hits" value="0 hits in 1 CRISPR screen"/>
</dbReference>
<dbReference type="GenomeRNAi" id="37535"/>
<dbReference type="PRO" id="PR:Q9W278"/>
<dbReference type="Proteomes" id="UP000000803">
    <property type="component" value="Chromosome 2R"/>
</dbReference>
<dbReference type="Bgee" id="FBgn0034707">
    <property type="expression patterns" value="Expressed in adult enteroendocrine precursor cell in adult midgut (Drosophila) and 23 other cell types or tissues"/>
</dbReference>
<dbReference type="GO" id="GO:0016592">
    <property type="term" value="C:mediator complex"/>
    <property type="evidence" value="ECO:0000314"/>
    <property type="project" value="UniProtKB"/>
</dbReference>
<dbReference type="GO" id="GO:0003712">
    <property type="term" value="F:transcription coregulator activity"/>
    <property type="evidence" value="ECO:0000314"/>
    <property type="project" value="UniProtKB"/>
</dbReference>
<dbReference type="GO" id="GO:0045893">
    <property type="term" value="P:positive regulation of DNA-templated transcription"/>
    <property type="evidence" value="ECO:0000318"/>
    <property type="project" value="GO_Central"/>
</dbReference>
<dbReference type="GO" id="GO:0006357">
    <property type="term" value="P:regulation of transcription by RNA polymerase II"/>
    <property type="evidence" value="ECO:0000314"/>
    <property type="project" value="UniProtKB"/>
</dbReference>
<dbReference type="GO" id="GO:0060260">
    <property type="term" value="P:regulation of transcription initiation by RNA polymerase II"/>
    <property type="evidence" value="ECO:0000250"/>
    <property type="project" value="FlyBase"/>
</dbReference>
<dbReference type="GO" id="GO:0009408">
    <property type="term" value="P:response to heat"/>
    <property type="evidence" value="ECO:0000315"/>
    <property type="project" value="UniProtKB"/>
</dbReference>
<dbReference type="GO" id="GO:0032496">
    <property type="term" value="P:response to lipopolysaccharide"/>
    <property type="evidence" value="ECO:0000315"/>
    <property type="project" value="UniProtKB"/>
</dbReference>
<dbReference type="Gene3D" id="2.130.10.10">
    <property type="entry name" value="YVTN repeat-like/Quinoprotein amine dehydrogenase"/>
    <property type="match status" value="1"/>
</dbReference>
<dbReference type="InterPro" id="IPR048616">
    <property type="entry name" value="MED16_bridge"/>
</dbReference>
<dbReference type="InterPro" id="IPR048338">
    <property type="entry name" value="Mediator_Med16"/>
</dbReference>
<dbReference type="InterPro" id="IPR048339">
    <property type="entry name" value="Mediator_Med16_C"/>
</dbReference>
<dbReference type="InterPro" id="IPR021665">
    <property type="entry name" value="Mediator_Med16_N"/>
</dbReference>
<dbReference type="InterPro" id="IPR015943">
    <property type="entry name" value="WD40/YVTN_repeat-like_dom_sf"/>
</dbReference>
<dbReference type="InterPro" id="IPR036322">
    <property type="entry name" value="WD40_repeat_dom_sf"/>
</dbReference>
<dbReference type="PANTHER" id="PTHR13224:SF6">
    <property type="entry name" value="MEDIATOR OF RNA POLYMERASE II TRANSCRIPTION SUBUNIT 16"/>
    <property type="match status" value="1"/>
</dbReference>
<dbReference type="PANTHER" id="PTHR13224">
    <property type="entry name" value="THYROID HORMONE RECEPTOR-ASSOCIATED PROTEIN-RELATED"/>
    <property type="match status" value="1"/>
</dbReference>
<dbReference type="Pfam" id="PF20718">
    <property type="entry name" value="Med16_bridge"/>
    <property type="match status" value="1"/>
</dbReference>
<dbReference type="Pfam" id="PF20719">
    <property type="entry name" value="Med16_C"/>
    <property type="match status" value="1"/>
</dbReference>
<dbReference type="Pfam" id="PF11635">
    <property type="entry name" value="Med16_N"/>
    <property type="match status" value="1"/>
</dbReference>
<dbReference type="SUPFAM" id="SSF50978">
    <property type="entry name" value="WD40 repeat-like"/>
    <property type="match status" value="1"/>
</dbReference>
<comment type="function">
    <text evidence="1 2 3">Component of the Mediator complex, a coactivator involved in the regulated transcription of nearly all RNA polymerase II-dependent genes. Mediator functions as a bridge to convey information from gene-specific regulatory proteins to the basal RNA polymerase II transcription machinery. Mediator is recruited to promoters by direct interactions with regulatory proteins and serves as a scaffold for the assembly of a functional preinitiation complex with RNA polymerase II and the general transcription factors (By similarity). Required for activated transcription of the MtnA, MtnB and MtnD genes. Required for transcriptional activation in response to lipopolysacchardie (LPS).</text>
</comment>
<comment type="subunit">
    <text evidence="1 2">Component of the Mediator complex (By similarity). Interacts with Dif.</text>
</comment>
<comment type="subcellular location">
    <subcellularLocation>
        <location evidence="1">Nucleus</location>
    </subcellularLocation>
</comment>
<comment type="similarity">
    <text evidence="4">Belongs to the Mediator complex subunit 16 family.</text>
</comment>
<comment type="sequence caution" evidence="4">
    <conflict type="frameshift">
        <sequence resource="EMBL-CDS" id="AAM48398"/>
    </conflict>
</comment>
<reference key="1">
    <citation type="submission" date="2000-07" db="EMBL/GenBank/DDBJ databases">
        <title>Transcriptional coactivators in Drosophila.</title>
        <authorList>
            <person name="Southworth J.W."/>
            <person name="Kennison J.A."/>
        </authorList>
    </citation>
    <scope>NUCLEOTIDE SEQUENCE [MRNA]</scope>
</reference>
<reference key="2">
    <citation type="journal article" date="2000" name="Science">
        <title>The genome sequence of Drosophila melanogaster.</title>
        <authorList>
            <person name="Adams M.D."/>
            <person name="Celniker S.E."/>
            <person name="Holt R.A."/>
            <person name="Evans C.A."/>
            <person name="Gocayne J.D."/>
            <person name="Amanatides P.G."/>
            <person name="Scherer S.E."/>
            <person name="Li P.W."/>
            <person name="Hoskins R.A."/>
            <person name="Galle R.F."/>
            <person name="George R.A."/>
            <person name="Lewis S.E."/>
            <person name="Richards S."/>
            <person name="Ashburner M."/>
            <person name="Henderson S.N."/>
            <person name="Sutton G.G."/>
            <person name="Wortman J.R."/>
            <person name="Yandell M.D."/>
            <person name="Zhang Q."/>
            <person name="Chen L.X."/>
            <person name="Brandon R.C."/>
            <person name="Rogers Y.-H.C."/>
            <person name="Blazej R.G."/>
            <person name="Champe M."/>
            <person name="Pfeiffer B.D."/>
            <person name="Wan K.H."/>
            <person name="Doyle C."/>
            <person name="Baxter E.G."/>
            <person name="Helt G."/>
            <person name="Nelson C.R."/>
            <person name="Miklos G.L.G."/>
            <person name="Abril J.F."/>
            <person name="Agbayani A."/>
            <person name="An H.-J."/>
            <person name="Andrews-Pfannkoch C."/>
            <person name="Baldwin D."/>
            <person name="Ballew R.M."/>
            <person name="Basu A."/>
            <person name="Baxendale J."/>
            <person name="Bayraktaroglu L."/>
            <person name="Beasley E.M."/>
            <person name="Beeson K.Y."/>
            <person name="Benos P.V."/>
            <person name="Berman B.P."/>
            <person name="Bhandari D."/>
            <person name="Bolshakov S."/>
            <person name="Borkova D."/>
            <person name="Botchan M.R."/>
            <person name="Bouck J."/>
            <person name="Brokstein P."/>
            <person name="Brottier P."/>
            <person name="Burtis K.C."/>
            <person name="Busam D.A."/>
            <person name="Butler H."/>
            <person name="Cadieu E."/>
            <person name="Center A."/>
            <person name="Chandra I."/>
            <person name="Cherry J.M."/>
            <person name="Cawley S."/>
            <person name="Dahlke C."/>
            <person name="Davenport L.B."/>
            <person name="Davies P."/>
            <person name="de Pablos B."/>
            <person name="Delcher A."/>
            <person name="Deng Z."/>
            <person name="Mays A.D."/>
            <person name="Dew I."/>
            <person name="Dietz S.M."/>
            <person name="Dodson K."/>
            <person name="Doup L.E."/>
            <person name="Downes M."/>
            <person name="Dugan-Rocha S."/>
            <person name="Dunkov B.C."/>
            <person name="Dunn P."/>
            <person name="Durbin K.J."/>
            <person name="Evangelista C.C."/>
            <person name="Ferraz C."/>
            <person name="Ferriera S."/>
            <person name="Fleischmann W."/>
            <person name="Fosler C."/>
            <person name="Gabrielian A.E."/>
            <person name="Garg N.S."/>
            <person name="Gelbart W.M."/>
            <person name="Glasser K."/>
            <person name="Glodek A."/>
            <person name="Gong F."/>
            <person name="Gorrell J.H."/>
            <person name="Gu Z."/>
            <person name="Guan P."/>
            <person name="Harris M."/>
            <person name="Harris N.L."/>
            <person name="Harvey D.A."/>
            <person name="Heiman T.J."/>
            <person name="Hernandez J.R."/>
            <person name="Houck J."/>
            <person name="Hostin D."/>
            <person name="Houston K.A."/>
            <person name="Howland T.J."/>
            <person name="Wei M.-H."/>
            <person name="Ibegwam C."/>
            <person name="Jalali M."/>
            <person name="Kalush F."/>
            <person name="Karpen G.H."/>
            <person name="Ke Z."/>
            <person name="Kennison J.A."/>
            <person name="Ketchum K.A."/>
            <person name="Kimmel B.E."/>
            <person name="Kodira C.D."/>
            <person name="Kraft C.L."/>
            <person name="Kravitz S."/>
            <person name="Kulp D."/>
            <person name="Lai Z."/>
            <person name="Lasko P."/>
            <person name="Lei Y."/>
            <person name="Levitsky A.A."/>
            <person name="Li J.H."/>
            <person name="Li Z."/>
            <person name="Liang Y."/>
            <person name="Lin X."/>
            <person name="Liu X."/>
            <person name="Mattei B."/>
            <person name="McIntosh T.C."/>
            <person name="McLeod M.P."/>
            <person name="McPherson D."/>
            <person name="Merkulov G."/>
            <person name="Milshina N.V."/>
            <person name="Mobarry C."/>
            <person name="Morris J."/>
            <person name="Moshrefi A."/>
            <person name="Mount S.M."/>
            <person name="Moy M."/>
            <person name="Murphy B."/>
            <person name="Murphy L."/>
            <person name="Muzny D.M."/>
            <person name="Nelson D.L."/>
            <person name="Nelson D.R."/>
            <person name="Nelson K.A."/>
            <person name="Nixon K."/>
            <person name="Nusskern D.R."/>
            <person name="Pacleb J.M."/>
            <person name="Palazzolo M."/>
            <person name="Pittman G.S."/>
            <person name="Pan S."/>
            <person name="Pollard J."/>
            <person name="Puri V."/>
            <person name="Reese M.G."/>
            <person name="Reinert K."/>
            <person name="Remington K."/>
            <person name="Saunders R.D.C."/>
            <person name="Scheeler F."/>
            <person name="Shen H."/>
            <person name="Shue B.C."/>
            <person name="Siden-Kiamos I."/>
            <person name="Simpson M."/>
            <person name="Skupski M.P."/>
            <person name="Smith T.J."/>
            <person name="Spier E."/>
            <person name="Spradling A.C."/>
            <person name="Stapleton M."/>
            <person name="Strong R."/>
            <person name="Sun E."/>
            <person name="Svirskas R."/>
            <person name="Tector C."/>
            <person name="Turner R."/>
            <person name="Venter E."/>
            <person name="Wang A.H."/>
            <person name="Wang X."/>
            <person name="Wang Z.-Y."/>
            <person name="Wassarman D.A."/>
            <person name="Weinstock G.M."/>
            <person name="Weissenbach J."/>
            <person name="Williams S.M."/>
            <person name="Woodage T."/>
            <person name="Worley K.C."/>
            <person name="Wu D."/>
            <person name="Yang S."/>
            <person name="Yao Q.A."/>
            <person name="Ye J."/>
            <person name="Yeh R.-F."/>
            <person name="Zaveri J.S."/>
            <person name="Zhan M."/>
            <person name="Zhang G."/>
            <person name="Zhao Q."/>
            <person name="Zheng L."/>
            <person name="Zheng X.H."/>
            <person name="Zhong F.N."/>
            <person name="Zhong W."/>
            <person name="Zhou X."/>
            <person name="Zhu S.C."/>
            <person name="Zhu X."/>
            <person name="Smith H.O."/>
            <person name="Gibbs R.A."/>
            <person name="Myers E.W."/>
            <person name="Rubin G.M."/>
            <person name="Venter J.C."/>
        </authorList>
    </citation>
    <scope>NUCLEOTIDE SEQUENCE [LARGE SCALE GENOMIC DNA]</scope>
    <source>
        <strain>Berkeley</strain>
    </source>
</reference>
<reference key="3">
    <citation type="journal article" date="2002" name="Genome Biol.">
        <title>Annotation of the Drosophila melanogaster euchromatic genome: a systematic review.</title>
        <authorList>
            <person name="Misra S."/>
            <person name="Crosby M.A."/>
            <person name="Mungall C.J."/>
            <person name="Matthews B.B."/>
            <person name="Campbell K.S."/>
            <person name="Hradecky P."/>
            <person name="Huang Y."/>
            <person name="Kaminker J.S."/>
            <person name="Millburn G.H."/>
            <person name="Prochnik S.E."/>
            <person name="Smith C.D."/>
            <person name="Tupy J.L."/>
            <person name="Whitfield E.J."/>
            <person name="Bayraktaroglu L."/>
            <person name="Berman B.P."/>
            <person name="Bettencourt B.R."/>
            <person name="Celniker S.E."/>
            <person name="de Grey A.D.N.J."/>
            <person name="Drysdale R.A."/>
            <person name="Harris N.L."/>
            <person name="Richter J."/>
            <person name="Russo S."/>
            <person name="Schroeder A.J."/>
            <person name="Shu S.Q."/>
            <person name="Stapleton M."/>
            <person name="Yamada C."/>
            <person name="Ashburner M."/>
            <person name="Gelbart W.M."/>
            <person name="Rubin G.M."/>
            <person name="Lewis S.E."/>
        </authorList>
    </citation>
    <scope>GENOME REANNOTATION</scope>
    <source>
        <strain>Berkeley</strain>
    </source>
</reference>
<reference key="4">
    <citation type="journal article" date="2002" name="Genome Biol.">
        <title>A Drosophila full-length cDNA resource.</title>
        <authorList>
            <person name="Stapleton M."/>
            <person name="Carlson J.W."/>
            <person name="Brokstein P."/>
            <person name="Yu C."/>
            <person name="Champe M."/>
            <person name="George R.A."/>
            <person name="Guarin H."/>
            <person name="Kronmiller B."/>
            <person name="Pacleb J.M."/>
            <person name="Park S."/>
            <person name="Wan K.H."/>
            <person name="Rubin G.M."/>
            <person name="Celniker S.E."/>
        </authorList>
    </citation>
    <scope>NUCLEOTIDE SEQUENCE [LARGE SCALE MRNA]</scope>
    <source>
        <strain>Berkeley</strain>
        <tissue>Embryo</tissue>
    </source>
</reference>
<reference key="5">
    <citation type="submission" date="2006-10" db="EMBL/GenBank/DDBJ databases">
        <authorList>
            <person name="Stapleton M."/>
            <person name="Carlson J.W."/>
            <person name="Frise E."/>
            <person name="Kapadia B."/>
            <person name="Park S."/>
            <person name="Wan K.H."/>
            <person name="Yu C."/>
            <person name="Celniker S.E."/>
        </authorList>
    </citation>
    <scope>NUCLEOTIDE SEQUENCE [LARGE SCALE MRNA]</scope>
    <source>
        <strain>Berkeley</strain>
        <tissue>Embryo</tissue>
    </source>
</reference>
<reference key="6">
    <citation type="journal article" date="2004" name="Proc. Natl. Acad. Sci. U.S.A.">
        <title>MED16 and MED23 of Mediator are coactivators of lipopolysaccharide- and heat-shock-induced transcriptional activators.</title>
        <authorList>
            <person name="Kim T.W."/>
            <person name="Kwon Y.-J."/>
            <person name="Kim J.M."/>
            <person name="Song Y.-H."/>
            <person name="Kim S.N."/>
            <person name="Kim Y.-J."/>
        </authorList>
    </citation>
    <scope>FUNCTION</scope>
    <scope>INTERACTION WITH DIF</scope>
</reference>
<reference key="7">
    <citation type="journal article" date="2006" name="Genes Dev.">
        <title>Coactivator cross-talk specifies transcriptional output.</title>
        <authorList>
            <person name="Marr M.T. II"/>
            <person name="Isogai Y."/>
            <person name="Wright K.J."/>
            <person name="Tjian R."/>
        </authorList>
    </citation>
    <scope>FUNCTION</scope>
</reference>
<feature type="chain" id="PRO_0000307622" description="Mediator of RNA polymerase II transcription subunit 16">
    <location>
        <begin position="1"/>
        <end position="818"/>
    </location>
</feature>
<feature type="repeat" description="WD 1">
    <location>
        <begin position="86"/>
        <end position="125"/>
    </location>
</feature>
<feature type="repeat" description="WD 2">
    <location>
        <begin position="296"/>
        <end position="342"/>
    </location>
</feature>
<feature type="repeat" description="WD 3">
    <location>
        <begin position="615"/>
        <end position="666"/>
    </location>
</feature>
<feature type="region of interest" description="Interaction with Dif">
    <location>
        <begin position="175"/>
        <end position="524"/>
    </location>
</feature>
<feature type="sequence conflict" description="In Ref. 1; AAG02459." evidence="4" ref="1">
    <original>T</original>
    <variation>P</variation>
    <location>
        <position position="191"/>
    </location>
</feature>
<gene>
    <name type="primary">MED16</name>
    <name type="synonym">Trap95</name>
    <name type="ORF">CG5465</name>
</gene>
<keyword id="KW-0010">Activator</keyword>
<keyword id="KW-0539">Nucleus</keyword>
<keyword id="KW-1185">Reference proteome</keyword>
<keyword id="KW-0677">Repeat</keyword>
<keyword id="KW-0804">Transcription</keyword>
<keyword id="KW-0805">Transcription regulation</keyword>
<keyword id="KW-0853">WD repeat</keyword>